<sequence length="371" mass="39820">MDVSEGGVTVSVPTASGGGEGAADDVFFNATQELNRDLTVATLAAFREREPRAASYLDAMTASGIRGVRAANAGWDVTMADVDADAVELATSNLARNGLDGEVVARDANSLLHDHDRVLDVVDIDPFGSPMPFADAAFANARNLVCVTATDTAPLCGAHFESGVRKYSATPRNTNYHAEMGLRILLGALARTAARYDVGVTPILSHVSDHYVRTYLELDHRATDANAAVEQVGHVYHCQQCLSRDHEYGLVAAPRAECPRCGGHQVLTAGPLWLGPAHEEAFAASVREQLTREMGEASQAFHLLQTIEGELHEPTHYDQHRLYSQWGEPAVGMAEFLDQLRDAGLRASRTHFGGTTFKTDGGLAEVEAAVL</sequence>
<reference key="1">
    <citation type="journal article" date="2000" name="Proc. Natl. Acad. Sci. U.S.A.">
        <title>Genome sequence of Halobacterium species NRC-1.</title>
        <authorList>
            <person name="Ng W.V."/>
            <person name="Kennedy S.P."/>
            <person name="Mahairas G.G."/>
            <person name="Berquist B."/>
            <person name="Pan M."/>
            <person name="Shukla H.D."/>
            <person name="Lasky S.R."/>
            <person name="Baliga N.S."/>
            <person name="Thorsson V."/>
            <person name="Sbrogna J."/>
            <person name="Swartzell S."/>
            <person name="Weir D."/>
            <person name="Hall J."/>
            <person name="Dahl T.A."/>
            <person name="Welti R."/>
            <person name="Goo Y.A."/>
            <person name="Leithauser B."/>
            <person name="Keller K."/>
            <person name="Cruz R."/>
            <person name="Danson M.J."/>
            <person name="Hough D.W."/>
            <person name="Maddocks D.G."/>
            <person name="Jablonski P.E."/>
            <person name="Krebs M.P."/>
            <person name="Angevine C.M."/>
            <person name="Dale H."/>
            <person name="Isenbarger T.A."/>
            <person name="Peck R.F."/>
            <person name="Pohlschroder M."/>
            <person name="Spudich J.L."/>
            <person name="Jung K.-H."/>
            <person name="Alam M."/>
            <person name="Freitas T."/>
            <person name="Hou S."/>
            <person name="Daniels C.J."/>
            <person name="Dennis P.P."/>
            <person name="Omer A.D."/>
            <person name="Ebhardt H."/>
            <person name="Lowe T.M."/>
            <person name="Liang P."/>
            <person name="Riley M."/>
            <person name="Hood L."/>
            <person name="DasSarma S."/>
        </authorList>
    </citation>
    <scope>NUCLEOTIDE SEQUENCE [LARGE SCALE GENOMIC DNA]</scope>
    <source>
        <strain>ATCC 700922 / JCM 11081 / NRC-1</strain>
    </source>
</reference>
<evidence type="ECO:0000255" key="1">
    <source>
        <dbReference type="HAMAP-Rule" id="MF_00290"/>
    </source>
</evidence>
<name>TRM1_HALSA</name>
<keyword id="KW-0479">Metal-binding</keyword>
<keyword id="KW-0489">Methyltransferase</keyword>
<keyword id="KW-1185">Reference proteome</keyword>
<keyword id="KW-0694">RNA-binding</keyword>
<keyword id="KW-0949">S-adenosyl-L-methionine</keyword>
<keyword id="KW-0808">Transferase</keyword>
<keyword id="KW-0819">tRNA processing</keyword>
<keyword id="KW-0820">tRNA-binding</keyword>
<keyword id="KW-0862">Zinc</keyword>
<organism>
    <name type="scientific">Halobacterium salinarum (strain ATCC 700922 / JCM 11081 / NRC-1)</name>
    <name type="common">Halobacterium halobium</name>
    <dbReference type="NCBI Taxonomy" id="64091"/>
    <lineage>
        <taxon>Archaea</taxon>
        <taxon>Methanobacteriati</taxon>
        <taxon>Methanobacteriota</taxon>
        <taxon>Stenosarchaea group</taxon>
        <taxon>Halobacteria</taxon>
        <taxon>Halobacteriales</taxon>
        <taxon>Halobacteriaceae</taxon>
        <taxon>Halobacterium</taxon>
        <taxon>Halobacterium salinarum NRC-34001</taxon>
    </lineage>
</organism>
<gene>
    <name evidence="1" type="primary">trm1</name>
    <name type="ordered locus">VNG_2088G</name>
</gene>
<dbReference type="EC" id="2.1.1.216" evidence="1"/>
<dbReference type="EMBL" id="AE004437">
    <property type="protein sequence ID" value="AAG20235.1"/>
    <property type="molecule type" value="Genomic_DNA"/>
</dbReference>
<dbReference type="PIR" id="G84358">
    <property type="entry name" value="G84358"/>
</dbReference>
<dbReference type="RefSeq" id="WP_010903537.1">
    <property type="nucleotide sequence ID" value="NC_002607.1"/>
</dbReference>
<dbReference type="SMR" id="P57705"/>
<dbReference type="FunCoup" id="P57705">
    <property type="interactions" value="184"/>
</dbReference>
<dbReference type="STRING" id="64091.VNG_2088G"/>
<dbReference type="PaxDb" id="64091-VNG_2088G"/>
<dbReference type="KEGG" id="hal:VNG_2088G"/>
<dbReference type="PATRIC" id="fig|64091.14.peg.1595"/>
<dbReference type="HOGENOM" id="CLU_010862_5_1_2"/>
<dbReference type="InParanoid" id="P57705"/>
<dbReference type="OrthoDB" id="372177at2157"/>
<dbReference type="PhylomeDB" id="P57705"/>
<dbReference type="Proteomes" id="UP000000554">
    <property type="component" value="Chromosome"/>
</dbReference>
<dbReference type="GO" id="GO:0160104">
    <property type="term" value="F:tRNA (guanine(26)-N2)-dimethyltransferase activity"/>
    <property type="evidence" value="ECO:0007669"/>
    <property type="project" value="UniProtKB-UniRule"/>
</dbReference>
<dbReference type="GO" id="GO:0000049">
    <property type="term" value="F:tRNA binding"/>
    <property type="evidence" value="ECO:0007669"/>
    <property type="project" value="UniProtKB-KW"/>
</dbReference>
<dbReference type="GO" id="GO:0002940">
    <property type="term" value="P:tRNA N2-guanine methylation"/>
    <property type="evidence" value="ECO:0000318"/>
    <property type="project" value="GO_Central"/>
</dbReference>
<dbReference type="CDD" id="cd02440">
    <property type="entry name" value="AdoMet_MTases"/>
    <property type="match status" value="1"/>
</dbReference>
<dbReference type="Gene3D" id="3.30.56.70">
    <property type="entry name" value="N2,N2-dimethylguanosine tRNA methyltransferase, C-terminal domain"/>
    <property type="match status" value="1"/>
</dbReference>
<dbReference type="Gene3D" id="3.40.50.150">
    <property type="entry name" value="Vaccinia Virus protein VP39"/>
    <property type="match status" value="1"/>
</dbReference>
<dbReference type="HAMAP" id="MF_00290">
    <property type="entry name" value="tRNA_dimethyltr_TRM1"/>
    <property type="match status" value="1"/>
</dbReference>
<dbReference type="InterPro" id="IPR029063">
    <property type="entry name" value="SAM-dependent_MTases_sf"/>
</dbReference>
<dbReference type="InterPro" id="IPR002905">
    <property type="entry name" value="Trm1"/>
</dbReference>
<dbReference type="InterPro" id="IPR022923">
    <property type="entry name" value="TRM1_arc_bac"/>
</dbReference>
<dbReference type="InterPro" id="IPR042296">
    <property type="entry name" value="tRNA_met_Trm1_C"/>
</dbReference>
<dbReference type="NCBIfam" id="NF003327">
    <property type="entry name" value="PRK04338.1-1"/>
    <property type="match status" value="1"/>
</dbReference>
<dbReference type="NCBIfam" id="TIGR00308">
    <property type="entry name" value="TRM1"/>
    <property type="match status" value="1"/>
</dbReference>
<dbReference type="PANTHER" id="PTHR10631">
    <property type="entry name" value="N 2 ,N 2 -DIMETHYLGUANOSINE TRNA METHYLTRANSFERASE"/>
    <property type="match status" value="1"/>
</dbReference>
<dbReference type="PANTHER" id="PTHR10631:SF3">
    <property type="entry name" value="TRNA (GUANINE(26)-N(2))-DIMETHYLTRANSFERASE"/>
    <property type="match status" value="1"/>
</dbReference>
<dbReference type="Pfam" id="PF02005">
    <property type="entry name" value="TRM"/>
    <property type="match status" value="1"/>
</dbReference>
<dbReference type="SUPFAM" id="SSF53335">
    <property type="entry name" value="S-adenosyl-L-methionine-dependent methyltransferases"/>
    <property type="match status" value="1"/>
</dbReference>
<dbReference type="PROSITE" id="PS51626">
    <property type="entry name" value="SAM_MT_TRM1"/>
    <property type="match status" value="1"/>
</dbReference>
<protein>
    <recommendedName>
        <fullName evidence="1">tRNA (guanine(26)-N(2))-dimethyltransferase</fullName>
        <ecNumber evidence="1">2.1.1.216</ecNumber>
    </recommendedName>
    <alternativeName>
        <fullName evidence="1">tRNA 2,2-dimethylguanosine-26 methyltransferase</fullName>
    </alternativeName>
    <alternativeName>
        <fullName evidence="1">tRNA(guanine-26,N(2)-N(2)) methyltransferase</fullName>
    </alternativeName>
    <alternativeName>
        <fullName evidence="1">tRNA(m(2,2)G26)dimethyltransferase</fullName>
    </alternativeName>
</protein>
<comment type="function">
    <text evidence="1">Dimethylates a single guanine residue at position 26 of a number of tRNAs using S-adenosyl-L-methionine as donor of the methyl groups.</text>
</comment>
<comment type="catalytic activity">
    <reaction evidence="1">
        <text>guanosine(26) in tRNA + 2 S-adenosyl-L-methionine = N(2)-dimethylguanosine(26) in tRNA + 2 S-adenosyl-L-homocysteine + 2 H(+)</text>
        <dbReference type="Rhea" id="RHEA:43140"/>
        <dbReference type="Rhea" id="RHEA-COMP:10359"/>
        <dbReference type="Rhea" id="RHEA-COMP:10360"/>
        <dbReference type="ChEBI" id="CHEBI:15378"/>
        <dbReference type="ChEBI" id="CHEBI:57856"/>
        <dbReference type="ChEBI" id="CHEBI:59789"/>
        <dbReference type="ChEBI" id="CHEBI:74269"/>
        <dbReference type="ChEBI" id="CHEBI:74513"/>
        <dbReference type="EC" id="2.1.1.216"/>
    </reaction>
</comment>
<comment type="similarity">
    <text evidence="1">Belongs to the class I-like SAM-binding methyltransferase superfamily. Trm1 family.</text>
</comment>
<accession>P57705</accession>
<accession>Q9HNI5</accession>
<proteinExistence type="inferred from homology"/>
<feature type="chain" id="PRO_0000147681" description="tRNA (guanine(26)-N(2))-dimethyltransferase">
    <location>
        <begin position="1"/>
        <end position="371"/>
    </location>
</feature>
<feature type="domain" description="Trm1 methyltransferase" evidence="1">
    <location>
        <begin position="1"/>
        <end position="370"/>
    </location>
</feature>
<feature type="binding site" evidence="1">
    <location>
        <position position="36"/>
    </location>
    <ligand>
        <name>S-adenosyl-L-methionine</name>
        <dbReference type="ChEBI" id="CHEBI:59789"/>
    </ligand>
</feature>
<feature type="binding site" evidence="1">
    <location>
        <position position="66"/>
    </location>
    <ligand>
        <name>S-adenosyl-L-methionine</name>
        <dbReference type="ChEBI" id="CHEBI:59789"/>
    </ligand>
</feature>
<feature type="binding site" evidence="1">
    <location>
        <position position="81"/>
    </location>
    <ligand>
        <name>S-adenosyl-L-methionine</name>
        <dbReference type="ChEBI" id="CHEBI:59789"/>
    </ligand>
</feature>
<feature type="binding site" evidence="1">
    <location>
        <position position="107"/>
    </location>
    <ligand>
        <name>S-adenosyl-L-methionine</name>
        <dbReference type="ChEBI" id="CHEBI:59789"/>
    </ligand>
</feature>
<feature type="binding site" evidence="1">
    <location>
        <position position="108"/>
    </location>
    <ligand>
        <name>S-adenosyl-L-methionine</name>
        <dbReference type="ChEBI" id="CHEBI:59789"/>
    </ligand>
</feature>
<feature type="binding site" evidence="1">
    <location>
        <position position="238"/>
    </location>
    <ligand>
        <name>Zn(2+)</name>
        <dbReference type="ChEBI" id="CHEBI:29105"/>
    </ligand>
</feature>
<feature type="binding site" evidence="1">
    <location>
        <position position="241"/>
    </location>
    <ligand>
        <name>Zn(2+)</name>
        <dbReference type="ChEBI" id="CHEBI:29105"/>
    </ligand>
</feature>
<feature type="binding site" evidence="1">
    <location>
        <position position="258"/>
    </location>
    <ligand>
        <name>Zn(2+)</name>
        <dbReference type="ChEBI" id="CHEBI:29105"/>
    </ligand>
</feature>
<feature type="binding site" evidence="1">
    <location>
        <position position="261"/>
    </location>
    <ligand>
        <name>Zn(2+)</name>
        <dbReference type="ChEBI" id="CHEBI:29105"/>
    </ligand>
</feature>